<name>OBG_THEAB</name>
<organism>
    <name type="scientific">Thermosipho africanus (strain TCF52B)</name>
    <dbReference type="NCBI Taxonomy" id="484019"/>
    <lineage>
        <taxon>Bacteria</taxon>
        <taxon>Thermotogati</taxon>
        <taxon>Thermotogota</taxon>
        <taxon>Thermotogae</taxon>
        <taxon>Thermotogales</taxon>
        <taxon>Fervidobacteriaceae</taxon>
        <taxon>Thermosipho</taxon>
    </lineage>
</organism>
<feature type="chain" id="PRO_0000386352" description="GTPase Obg">
    <location>
        <begin position="1"/>
        <end position="434"/>
    </location>
</feature>
<feature type="domain" description="Obg" evidence="3">
    <location>
        <begin position="4"/>
        <end position="162"/>
    </location>
</feature>
<feature type="domain" description="OBG-type G" evidence="1">
    <location>
        <begin position="163"/>
        <end position="333"/>
    </location>
</feature>
<feature type="domain" description="OCT" evidence="2">
    <location>
        <begin position="355"/>
        <end position="434"/>
    </location>
</feature>
<feature type="binding site" evidence="1">
    <location>
        <begin position="169"/>
        <end position="176"/>
    </location>
    <ligand>
        <name>GTP</name>
        <dbReference type="ChEBI" id="CHEBI:37565"/>
    </ligand>
</feature>
<feature type="binding site" evidence="1">
    <location>
        <position position="176"/>
    </location>
    <ligand>
        <name>Mg(2+)</name>
        <dbReference type="ChEBI" id="CHEBI:18420"/>
    </ligand>
</feature>
<feature type="binding site" evidence="1">
    <location>
        <begin position="194"/>
        <end position="198"/>
    </location>
    <ligand>
        <name>GTP</name>
        <dbReference type="ChEBI" id="CHEBI:37565"/>
    </ligand>
</feature>
<feature type="binding site" evidence="1">
    <location>
        <position position="196"/>
    </location>
    <ligand>
        <name>Mg(2+)</name>
        <dbReference type="ChEBI" id="CHEBI:18420"/>
    </ligand>
</feature>
<feature type="binding site" evidence="1">
    <location>
        <begin position="215"/>
        <end position="218"/>
    </location>
    <ligand>
        <name>GTP</name>
        <dbReference type="ChEBI" id="CHEBI:37565"/>
    </ligand>
</feature>
<feature type="binding site" evidence="1">
    <location>
        <begin position="285"/>
        <end position="288"/>
    </location>
    <ligand>
        <name>GTP</name>
        <dbReference type="ChEBI" id="CHEBI:37565"/>
    </ligand>
</feature>
<feature type="binding site" evidence="1">
    <location>
        <begin position="314"/>
        <end position="316"/>
    </location>
    <ligand>
        <name>GTP</name>
        <dbReference type="ChEBI" id="CHEBI:37565"/>
    </ligand>
</feature>
<evidence type="ECO:0000255" key="1">
    <source>
        <dbReference type="HAMAP-Rule" id="MF_01454"/>
    </source>
</evidence>
<evidence type="ECO:0000255" key="2">
    <source>
        <dbReference type="PROSITE-ProRule" id="PRU01229"/>
    </source>
</evidence>
<evidence type="ECO:0000255" key="3">
    <source>
        <dbReference type="PROSITE-ProRule" id="PRU01231"/>
    </source>
</evidence>
<protein>
    <recommendedName>
        <fullName evidence="1">GTPase Obg</fullName>
        <ecNumber evidence="1">3.6.5.-</ecNumber>
    </recommendedName>
    <alternativeName>
        <fullName evidence="1">GTP-binding protein Obg</fullName>
    </alternativeName>
</protein>
<accession>B7IGK8</accession>
<sequence length="434" mass="48162">MQKADFIDRIVIYVKGGKGGDGSASFRHEKYVPKGGPDGGDGGNGGYVFLKANPNLSTLLSVSEKKKYIAENGENGKGKKMHGRNGKDVVIDVPVGTVVKDFETGEIIADLDKPGMVVCVARGGKGGRGNVHFKSSTMRAPKISERGFEGEERKLVLELKLLADVGLVGYPNVGKSSFISKISNARPKIANYPFTTTIPNLGVVTVNELQFVVADIPGLIKGASKGAGLGNVFLRHVERCSVIAHIVDISGMEGRDPVQDYFDIRNELEHFSSELAQKEEIIIANKIDLISKEELEKRLEKLRKETGKQIFPTSIITGEGIEKIVYKLAEIVKESKKFHTQSEVVNEQIKRPKPLWKELPERFNIEIIKEGNDFIVTGTYVEEWAKRLNLNQKDGYRKFMELLEKNGLEKKLKEAGIKDGDTVWVAQRAFEYKE</sequence>
<proteinExistence type="inferred from homology"/>
<reference key="1">
    <citation type="journal article" date="2009" name="J. Bacteriol.">
        <title>The genome of Thermosipho africanus TCF52B: lateral genetic connections to the Firmicutes and Archaea.</title>
        <authorList>
            <person name="Nesboe C.L."/>
            <person name="Bapteste E."/>
            <person name="Curtis B."/>
            <person name="Dahle H."/>
            <person name="Lopez P."/>
            <person name="Macleod D."/>
            <person name="Dlutek M."/>
            <person name="Bowman S."/>
            <person name="Zhaxybayeva O."/>
            <person name="Birkeland N.-K."/>
            <person name="Doolittle W.F."/>
        </authorList>
    </citation>
    <scope>NUCLEOTIDE SEQUENCE [LARGE SCALE GENOMIC DNA]</scope>
    <source>
        <strain>TCF52B</strain>
    </source>
</reference>
<gene>
    <name evidence="1" type="primary">obg</name>
    <name type="ordered locus">THA_757</name>
</gene>
<dbReference type="EC" id="3.6.5.-" evidence="1"/>
<dbReference type="EMBL" id="CP001185">
    <property type="protein sequence ID" value="ACJ75222.1"/>
    <property type="molecule type" value="Genomic_DNA"/>
</dbReference>
<dbReference type="SMR" id="B7IGK8"/>
<dbReference type="STRING" id="484019.THA_757"/>
<dbReference type="KEGG" id="taf:THA_757"/>
<dbReference type="eggNOG" id="COG0536">
    <property type="taxonomic scope" value="Bacteria"/>
</dbReference>
<dbReference type="HOGENOM" id="CLU_011747_2_1_0"/>
<dbReference type="OrthoDB" id="9807318at2"/>
<dbReference type="Proteomes" id="UP000002453">
    <property type="component" value="Chromosome"/>
</dbReference>
<dbReference type="GO" id="GO:0005737">
    <property type="term" value="C:cytoplasm"/>
    <property type="evidence" value="ECO:0007669"/>
    <property type="project" value="UniProtKB-SubCell"/>
</dbReference>
<dbReference type="GO" id="GO:0005525">
    <property type="term" value="F:GTP binding"/>
    <property type="evidence" value="ECO:0007669"/>
    <property type="project" value="UniProtKB-UniRule"/>
</dbReference>
<dbReference type="GO" id="GO:0003924">
    <property type="term" value="F:GTPase activity"/>
    <property type="evidence" value="ECO:0007669"/>
    <property type="project" value="UniProtKB-UniRule"/>
</dbReference>
<dbReference type="GO" id="GO:0000287">
    <property type="term" value="F:magnesium ion binding"/>
    <property type="evidence" value="ECO:0007669"/>
    <property type="project" value="InterPro"/>
</dbReference>
<dbReference type="GO" id="GO:0042254">
    <property type="term" value="P:ribosome biogenesis"/>
    <property type="evidence" value="ECO:0007669"/>
    <property type="project" value="UniProtKB-UniRule"/>
</dbReference>
<dbReference type="CDD" id="cd01898">
    <property type="entry name" value="Obg"/>
    <property type="match status" value="1"/>
</dbReference>
<dbReference type="FunFam" id="2.70.210.12:FF:000001">
    <property type="entry name" value="GTPase Obg"/>
    <property type="match status" value="1"/>
</dbReference>
<dbReference type="Gene3D" id="3.30.300.350">
    <property type="entry name" value="GTP-binding protein OBG, C-terminal domain"/>
    <property type="match status" value="1"/>
</dbReference>
<dbReference type="Gene3D" id="2.70.210.12">
    <property type="entry name" value="GTP1/OBG domain"/>
    <property type="match status" value="1"/>
</dbReference>
<dbReference type="Gene3D" id="3.40.50.300">
    <property type="entry name" value="P-loop containing nucleotide triphosphate hydrolases"/>
    <property type="match status" value="1"/>
</dbReference>
<dbReference type="HAMAP" id="MF_01454">
    <property type="entry name" value="GTPase_Obg"/>
    <property type="match status" value="1"/>
</dbReference>
<dbReference type="InterPro" id="IPR031167">
    <property type="entry name" value="G_OBG"/>
</dbReference>
<dbReference type="InterPro" id="IPR006073">
    <property type="entry name" value="GTP-bd"/>
</dbReference>
<dbReference type="InterPro" id="IPR014100">
    <property type="entry name" value="GTP-bd_Obg/CgtA"/>
</dbReference>
<dbReference type="InterPro" id="IPR036346">
    <property type="entry name" value="GTP-bd_prot_GTP1/OBG_C_sf"/>
</dbReference>
<dbReference type="InterPro" id="IPR006074">
    <property type="entry name" value="GTP1-OBG_CS"/>
</dbReference>
<dbReference type="InterPro" id="IPR006169">
    <property type="entry name" value="GTP1_OBG_dom"/>
</dbReference>
<dbReference type="InterPro" id="IPR036726">
    <property type="entry name" value="GTP1_OBG_dom_sf"/>
</dbReference>
<dbReference type="InterPro" id="IPR045086">
    <property type="entry name" value="OBG_GTPase"/>
</dbReference>
<dbReference type="InterPro" id="IPR015349">
    <property type="entry name" value="OCT_dom"/>
</dbReference>
<dbReference type="InterPro" id="IPR027417">
    <property type="entry name" value="P-loop_NTPase"/>
</dbReference>
<dbReference type="NCBIfam" id="TIGR02729">
    <property type="entry name" value="Obg_CgtA"/>
    <property type="match status" value="1"/>
</dbReference>
<dbReference type="NCBIfam" id="TIGR03595">
    <property type="entry name" value="Obg_CgtA_exten"/>
    <property type="match status" value="1"/>
</dbReference>
<dbReference type="NCBIfam" id="NF008954">
    <property type="entry name" value="PRK12296.1"/>
    <property type="match status" value="1"/>
</dbReference>
<dbReference type="NCBIfam" id="NF008955">
    <property type="entry name" value="PRK12297.1"/>
    <property type="match status" value="1"/>
</dbReference>
<dbReference type="NCBIfam" id="NF008956">
    <property type="entry name" value="PRK12299.1"/>
    <property type="match status" value="1"/>
</dbReference>
<dbReference type="PANTHER" id="PTHR11702">
    <property type="entry name" value="DEVELOPMENTALLY REGULATED GTP-BINDING PROTEIN-RELATED"/>
    <property type="match status" value="1"/>
</dbReference>
<dbReference type="PANTHER" id="PTHR11702:SF31">
    <property type="entry name" value="MITOCHONDRIAL RIBOSOME-ASSOCIATED GTPASE 2"/>
    <property type="match status" value="1"/>
</dbReference>
<dbReference type="Pfam" id="PF09269">
    <property type="entry name" value="DUF1967"/>
    <property type="match status" value="1"/>
</dbReference>
<dbReference type="Pfam" id="PF01018">
    <property type="entry name" value="GTP1_OBG"/>
    <property type="match status" value="1"/>
</dbReference>
<dbReference type="Pfam" id="PF01926">
    <property type="entry name" value="MMR_HSR1"/>
    <property type="match status" value="1"/>
</dbReference>
<dbReference type="PRINTS" id="PR00326">
    <property type="entry name" value="GTP1OBG"/>
</dbReference>
<dbReference type="SUPFAM" id="SSF102741">
    <property type="entry name" value="Obg GTP-binding protein C-terminal domain"/>
    <property type="match status" value="1"/>
</dbReference>
<dbReference type="SUPFAM" id="SSF82051">
    <property type="entry name" value="Obg GTP-binding protein N-terminal domain"/>
    <property type="match status" value="1"/>
</dbReference>
<dbReference type="SUPFAM" id="SSF52540">
    <property type="entry name" value="P-loop containing nucleoside triphosphate hydrolases"/>
    <property type="match status" value="1"/>
</dbReference>
<dbReference type="PROSITE" id="PS51710">
    <property type="entry name" value="G_OBG"/>
    <property type="match status" value="1"/>
</dbReference>
<dbReference type="PROSITE" id="PS00905">
    <property type="entry name" value="GTP1_OBG"/>
    <property type="match status" value="1"/>
</dbReference>
<dbReference type="PROSITE" id="PS51883">
    <property type="entry name" value="OBG"/>
    <property type="match status" value="1"/>
</dbReference>
<dbReference type="PROSITE" id="PS51881">
    <property type="entry name" value="OCT"/>
    <property type="match status" value="1"/>
</dbReference>
<keyword id="KW-0963">Cytoplasm</keyword>
<keyword id="KW-0342">GTP-binding</keyword>
<keyword id="KW-0378">Hydrolase</keyword>
<keyword id="KW-0460">Magnesium</keyword>
<keyword id="KW-0479">Metal-binding</keyword>
<keyword id="KW-0547">Nucleotide-binding</keyword>
<keyword id="KW-1185">Reference proteome</keyword>
<comment type="function">
    <text evidence="1">An essential GTPase which binds GTP, GDP and possibly (p)ppGpp with moderate affinity, with high nucleotide exchange rates and a fairly low GTP hydrolysis rate. Plays a role in control of the cell cycle, stress response, ribosome biogenesis and in those bacteria that undergo differentiation, in morphogenesis control.</text>
</comment>
<comment type="cofactor">
    <cofactor evidence="1">
        <name>Mg(2+)</name>
        <dbReference type="ChEBI" id="CHEBI:18420"/>
    </cofactor>
</comment>
<comment type="subunit">
    <text evidence="1">Monomer.</text>
</comment>
<comment type="subcellular location">
    <subcellularLocation>
        <location evidence="1">Cytoplasm</location>
    </subcellularLocation>
</comment>
<comment type="similarity">
    <text evidence="1">Belongs to the TRAFAC class OBG-HflX-like GTPase superfamily. OBG GTPase family.</text>
</comment>